<gene>
    <name type="primary">NFYB</name>
    <name type="synonym">HAP3</name>
</gene>
<name>NFYB_HUMAN</name>
<accession>P25208</accession>
<accession>A8K7B9</accession>
<accession>Q96IY8</accession>
<comment type="function">
    <text>Component of the sequence-specific heterotrimeric transcription factor (NF-Y) which specifically recognizes a 5'-CCAAT-3' box motif found in the promoters of its target genes. NF-Y can function as both an activator and a repressor, depending on its interacting cofactors.</text>
</comment>
<comment type="subunit">
    <text evidence="3 4">Heterotrimeric transcription factor composed of three components, NF-YA, NF-YB and NF-YC. NF-YB and NF-YC must interact and dimerize for NF-YA association and DNA binding. Interacts with C1QBP.</text>
</comment>
<comment type="interaction">
    <interactant intactId="EBI-389728">
        <id>P25208</id>
    </interactant>
    <interactant intactId="EBI-741181">
        <id>Q6RW13</id>
        <label>AGTRAP</label>
    </interactant>
    <organismsDiffer>false</organismsDiffer>
    <experiments>3</experiments>
</comment>
<comment type="interaction">
    <interactant intactId="EBI-389728">
        <id>P25208</id>
    </interactant>
    <interactant intactId="EBI-6624398">
        <id>P06307</id>
        <label>CCK</label>
    </interactant>
    <organismsDiffer>false</organismsDiffer>
    <experiments>3</experiments>
</comment>
<comment type="interaction">
    <interactant intactId="EBI-389728">
        <id>P25208</id>
    </interactant>
    <interactant intactId="EBI-712941">
        <id>Q14919</id>
        <label>DRAP1</label>
    </interactant>
    <organismsDiffer>false</organismsDiffer>
    <experiments>4</experiments>
</comment>
<comment type="interaction">
    <interactant intactId="EBI-389728">
        <id>P25208</id>
    </interactant>
    <interactant intactId="EBI-21591415">
        <id>P13473-2</id>
        <label>LAMP2</label>
    </interactant>
    <organismsDiffer>false</organismsDiffer>
    <experiments>3</experiments>
</comment>
<comment type="interaction">
    <interactant intactId="EBI-389728">
        <id>P25208</id>
    </interactant>
    <interactant intactId="EBI-16439278">
        <id>Q6FHY5</id>
        <label>MEOX2</label>
    </interactant>
    <organismsDiffer>false</organismsDiffer>
    <experiments>3</experiments>
</comment>
<comment type="interaction">
    <interactant intactId="EBI-389728">
        <id>P25208</id>
    </interactant>
    <interactant intactId="EBI-389739">
        <id>P23511</id>
        <label>NFYA</label>
    </interactant>
    <organismsDiffer>false</organismsDiffer>
    <experiments>8</experiments>
</comment>
<comment type="interaction">
    <interactant intactId="EBI-389728">
        <id>P25208</id>
    </interactant>
    <interactant intactId="EBI-11061759">
        <id>P23511-2</id>
        <label>NFYA</label>
    </interactant>
    <organismsDiffer>false</organismsDiffer>
    <experiments>6</experiments>
</comment>
<comment type="interaction">
    <interactant intactId="EBI-389728">
        <id>P25208</id>
    </interactant>
    <interactant intactId="EBI-389755">
        <id>Q13952</id>
        <label>NFYC</label>
    </interactant>
    <organismsDiffer>false</organismsDiffer>
    <experiments>9</experiments>
</comment>
<comment type="interaction">
    <interactant intactId="EBI-389728">
        <id>P25208</id>
    </interactant>
    <interactant intactId="EBI-11956831">
        <id>Q13952-2</id>
        <label>NFYC</label>
    </interactant>
    <organismsDiffer>false</organismsDiffer>
    <experiments>6</experiments>
</comment>
<comment type="interaction">
    <interactant intactId="EBI-389728">
        <id>P25208</id>
    </interactant>
    <interactant intactId="EBI-867034">
        <id>Q9NR33</id>
        <label>POLE4</label>
    </interactant>
    <organismsDiffer>false</organismsDiffer>
    <experiments>12</experiments>
</comment>
<comment type="interaction">
    <interactant intactId="EBI-389728">
        <id>P25208</id>
    </interactant>
    <interactant intactId="EBI-2623095">
        <id>Q9Y371</id>
        <label>SH3GLB1</label>
    </interactant>
    <organismsDiffer>false</organismsDiffer>
    <experiments>3</experiments>
</comment>
<comment type="interaction">
    <interactant intactId="EBI-389728">
        <id>P25208</id>
    </interactant>
    <interactant intactId="EBI-366083">
        <id>P04637</id>
        <label>TP53</label>
    </interactant>
    <organismsDiffer>false</organismsDiffer>
    <experiments>6</experiments>
</comment>
<comment type="subcellular location">
    <subcellularLocation>
        <location>Nucleus</location>
    </subcellularLocation>
</comment>
<comment type="domain">
    <text>Can be divided into 3 domains: the weakly conserved A domain, the highly conserved B domain thought to be involved in subunit interaction and DNA binding, and the Glu-rich C domain.</text>
</comment>
<comment type="PTM">
    <text>Monoubiquitination at Lys-140 plays an important role in transcriptional activation by allowing the deposition of histone H3 methylations as well as histone H2B monoubiquitination at 'Lys-121'.</text>
</comment>
<comment type="similarity">
    <text evidence="5">Belongs to the NFYB/HAP3 subunit family.</text>
</comment>
<comment type="sequence caution" evidence="5">
    <conflict type="erroneous initiation">
        <sequence resource="EMBL-CDS" id="CAA42230"/>
    </conflict>
</comment>
<protein>
    <recommendedName>
        <fullName>Nuclear transcription factor Y subunit beta</fullName>
    </recommendedName>
    <alternativeName>
        <fullName>CAAT box DNA-binding protein subunit B</fullName>
    </alternativeName>
    <alternativeName>
        <fullName>Nuclear transcription factor Y subunit B</fullName>
        <shortName>NF-YB</shortName>
    </alternativeName>
</protein>
<dbReference type="EMBL" id="L06145">
    <property type="protein sequence ID" value="AAA59930.1"/>
    <property type="molecule type" value="mRNA"/>
</dbReference>
<dbReference type="EMBL" id="X59710">
    <property type="protein sequence ID" value="CAA42230.1"/>
    <property type="status" value="ALT_INIT"/>
    <property type="molecule type" value="mRNA"/>
</dbReference>
<dbReference type="EMBL" id="AK291934">
    <property type="protein sequence ID" value="BAF84623.1"/>
    <property type="molecule type" value="mRNA"/>
</dbReference>
<dbReference type="EMBL" id="CH471054">
    <property type="protein sequence ID" value="EAW97740.1"/>
    <property type="molecule type" value="Genomic_DNA"/>
</dbReference>
<dbReference type="EMBL" id="BC005316">
    <property type="protein sequence ID" value="AAH05316.1"/>
    <property type="molecule type" value="mRNA"/>
</dbReference>
<dbReference type="EMBL" id="BC005317">
    <property type="protein sequence ID" value="AAH05317.1"/>
    <property type="molecule type" value="mRNA"/>
</dbReference>
<dbReference type="EMBL" id="BC007035">
    <property type="protein sequence ID" value="AAH07035.1"/>
    <property type="molecule type" value="mRNA"/>
</dbReference>
<dbReference type="CCDS" id="CCDS9098.1"/>
<dbReference type="PIR" id="S22817">
    <property type="entry name" value="S22817"/>
</dbReference>
<dbReference type="RefSeq" id="NP_001401449.1">
    <property type="nucleotide sequence ID" value="NM_001414520.1"/>
</dbReference>
<dbReference type="RefSeq" id="NP_001401450.1">
    <property type="nucleotide sequence ID" value="NM_001414521.1"/>
</dbReference>
<dbReference type="RefSeq" id="NP_006157.1">
    <property type="nucleotide sequence ID" value="NM_006166.4"/>
</dbReference>
<dbReference type="RefSeq" id="XP_047284836.1">
    <property type="nucleotide sequence ID" value="XM_047428880.1"/>
</dbReference>
<dbReference type="RefSeq" id="XP_054228089.1">
    <property type="nucleotide sequence ID" value="XM_054372114.1"/>
</dbReference>
<dbReference type="PDB" id="1N1J">
    <property type="method" value="X-ray"/>
    <property type="resolution" value="1.67 A"/>
    <property type="chains" value="A=51-143"/>
</dbReference>
<dbReference type="PDB" id="4AWL">
    <property type="method" value="X-ray"/>
    <property type="resolution" value="3.08 A"/>
    <property type="chains" value="B=51-143"/>
</dbReference>
<dbReference type="PDB" id="4CSR">
    <property type="method" value="X-ray"/>
    <property type="resolution" value="1.50 A"/>
    <property type="chains" value="A=51-143"/>
</dbReference>
<dbReference type="PDB" id="6QMP">
    <property type="method" value="X-ray"/>
    <property type="resolution" value="2.00 A"/>
    <property type="chains" value="B=51-143"/>
</dbReference>
<dbReference type="PDB" id="6QMQ">
    <property type="method" value="X-ray"/>
    <property type="resolution" value="2.50 A"/>
    <property type="chains" value="B=51-143"/>
</dbReference>
<dbReference type="PDB" id="6QMS">
    <property type="method" value="X-ray"/>
    <property type="resolution" value="1.80 A"/>
    <property type="chains" value="B=51-143"/>
</dbReference>
<dbReference type="PDB" id="7AH8">
    <property type="method" value="X-ray"/>
    <property type="resolution" value="2.70 A"/>
    <property type="chains" value="A/C=54-142"/>
</dbReference>
<dbReference type="PDB" id="8QU2">
    <property type="method" value="X-ray"/>
    <property type="resolution" value="1.45 A"/>
    <property type="chains" value="B=51-143"/>
</dbReference>
<dbReference type="PDB" id="8QU3">
    <property type="method" value="X-ray"/>
    <property type="resolution" value="1.41 A"/>
    <property type="chains" value="B=51-143"/>
</dbReference>
<dbReference type="PDB" id="8QU4">
    <property type="method" value="X-ray"/>
    <property type="resolution" value="1.38 A"/>
    <property type="chains" value="B=51-143"/>
</dbReference>
<dbReference type="PDBsum" id="1N1J"/>
<dbReference type="PDBsum" id="4AWL"/>
<dbReference type="PDBsum" id="4CSR"/>
<dbReference type="PDBsum" id="6QMP"/>
<dbReference type="PDBsum" id="6QMQ"/>
<dbReference type="PDBsum" id="6QMS"/>
<dbReference type="PDBsum" id="7AH8"/>
<dbReference type="PDBsum" id="8QU2"/>
<dbReference type="PDBsum" id="8QU3"/>
<dbReference type="PDBsum" id="8QU4"/>
<dbReference type="SASBDB" id="P25208"/>
<dbReference type="SMR" id="P25208"/>
<dbReference type="BioGRID" id="110867">
    <property type="interactions" value="58"/>
</dbReference>
<dbReference type="ComplexPortal" id="CPX-1956">
    <property type="entry name" value="CCAAT-binding factor complex"/>
</dbReference>
<dbReference type="CORUM" id="P25208"/>
<dbReference type="FunCoup" id="P25208">
    <property type="interactions" value="4086"/>
</dbReference>
<dbReference type="IntAct" id="P25208">
    <property type="interactions" value="14"/>
</dbReference>
<dbReference type="STRING" id="9606.ENSP00000240055"/>
<dbReference type="GlyGen" id="P25208">
    <property type="glycosylation" value="1 site, 1 O-linked glycan (1 site)"/>
</dbReference>
<dbReference type="iPTMnet" id="P25208"/>
<dbReference type="PhosphoSitePlus" id="P25208"/>
<dbReference type="BioMuta" id="NFYB"/>
<dbReference type="DMDM" id="399193"/>
<dbReference type="jPOST" id="P25208"/>
<dbReference type="MassIVE" id="P25208"/>
<dbReference type="PaxDb" id="9606-ENSP00000240055"/>
<dbReference type="PeptideAtlas" id="P25208"/>
<dbReference type="ProteomicsDB" id="54266"/>
<dbReference type="Pumba" id="P25208"/>
<dbReference type="Antibodypedia" id="3780">
    <property type="antibodies" value="273 antibodies from 33 providers"/>
</dbReference>
<dbReference type="DNASU" id="4801"/>
<dbReference type="Ensembl" id="ENST00000240055.8">
    <property type="protein sequence ID" value="ENSP00000240055.3"/>
    <property type="gene ID" value="ENSG00000120837.8"/>
</dbReference>
<dbReference type="Ensembl" id="ENST00000551727.5">
    <property type="protein sequence ID" value="ENSP00000447486.1"/>
    <property type="gene ID" value="ENSG00000120837.8"/>
</dbReference>
<dbReference type="GeneID" id="4801"/>
<dbReference type="KEGG" id="hsa:4801"/>
<dbReference type="MANE-Select" id="ENST00000240055.8">
    <property type="protein sequence ID" value="ENSP00000240055.3"/>
    <property type="RefSeq nucleotide sequence ID" value="NM_006166.4"/>
    <property type="RefSeq protein sequence ID" value="NP_006157.1"/>
</dbReference>
<dbReference type="UCSC" id="uc001tkl.2">
    <property type="organism name" value="human"/>
</dbReference>
<dbReference type="AGR" id="HGNC:7805"/>
<dbReference type="CTD" id="4801"/>
<dbReference type="DisGeNET" id="4801"/>
<dbReference type="GeneCards" id="NFYB"/>
<dbReference type="HGNC" id="HGNC:7805">
    <property type="gene designation" value="NFYB"/>
</dbReference>
<dbReference type="HPA" id="ENSG00000120837">
    <property type="expression patterns" value="Low tissue specificity"/>
</dbReference>
<dbReference type="MIM" id="189904">
    <property type="type" value="gene"/>
</dbReference>
<dbReference type="neXtProt" id="NX_P25208"/>
<dbReference type="OpenTargets" id="ENSG00000120837"/>
<dbReference type="PharmGKB" id="PA31610"/>
<dbReference type="VEuPathDB" id="HostDB:ENSG00000120837"/>
<dbReference type="eggNOG" id="KOG0869">
    <property type="taxonomic scope" value="Eukaryota"/>
</dbReference>
<dbReference type="GeneTree" id="ENSGT00940000154917"/>
<dbReference type="InParanoid" id="P25208"/>
<dbReference type="OMA" id="NATHGDS"/>
<dbReference type="OrthoDB" id="386949at2759"/>
<dbReference type="PAN-GO" id="P25208">
    <property type="GO annotations" value="4 GO annotations based on evolutionary models"/>
</dbReference>
<dbReference type="PhylomeDB" id="P25208"/>
<dbReference type="TreeFam" id="TF314521"/>
<dbReference type="PathwayCommons" id="P25208"/>
<dbReference type="Reactome" id="R-HSA-1989781">
    <property type="pathway name" value="PPARA activates gene expression"/>
</dbReference>
<dbReference type="Reactome" id="R-HSA-2426168">
    <property type="pathway name" value="Activation of gene expression by SREBF (SREBP)"/>
</dbReference>
<dbReference type="Reactome" id="R-HSA-380994">
    <property type="pathway name" value="ATF4 activates genes in response to endoplasmic reticulum stress"/>
</dbReference>
<dbReference type="Reactome" id="R-HSA-381183">
    <property type="pathway name" value="ATF6 (ATF6-alpha) activates chaperone genes"/>
</dbReference>
<dbReference type="Reactome" id="R-HSA-9614657">
    <property type="pathway name" value="FOXO-mediated transcription of cell death genes"/>
</dbReference>
<dbReference type="SignaLink" id="P25208"/>
<dbReference type="SIGNOR" id="P25208"/>
<dbReference type="BioGRID-ORCS" id="4801">
    <property type="hits" value="559 hits in 1148 CRISPR screens"/>
</dbReference>
<dbReference type="ChiTaRS" id="NFYB">
    <property type="organism name" value="human"/>
</dbReference>
<dbReference type="EvolutionaryTrace" id="P25208"/>
<dbReference type="GeneWiki" id="NFYB"/>
<dbReference type="GenomeRNAi" id="4801"/>
<dbReference type="Pharos" id="P25208">
    <property type="development level" value="Tbio"/>
</dbReference>
<dbReference type="PRO" id="PR:P25208"/>
<dbReference type="Proteomes" id="UP000005640">
    <property type="component" value="Chromosome 12"/>
</dbReference>
<dbReference type="RNAct" id="P25208">
    <property type="molecule type" value="protein"/>
</dbReference>
<dbReference type="Bgee" id="ENSG00000120837">
    <property type="expression patterns" value="Expressed in ganglionic eminence and 212 other cell types or tissues"/>
</dbReference>
<dbReference type="ExpressionAtlas" id="P25208">
    <property type="expression patterns" value="baseline and differential"/>
</dbReference>
<dbReference type="GO" id="GO:0016602">
    <property type="term" value="C:CCAAT-binding factor complex"/>
    <property type="evidence" value="ECO:0000314"/>
    <property type="project" value="UniProtKB"/>
</dbReference>
<dbReference type="GO" id="GO:0000785">
    <property type="term" value="C:chromatin"/>
    <property type="evidence" value="ECO:0000247"/>
    <property type="project" value="NTNU_SB"/>
</dbReference>
<dbReference type="GO" id="GO:0005654">
    <property type="term" value="C:nucleoplasm"/>
    <property type="evidence" value="ECO:0000314"/>
    <property type="project" value="HPA"/>
</dbReference>
<dbReference type="GO" id="GO:0005634">
    <property type="term" value="C:nucleus"/>
    <property type="evidence" value="ECO:0000314"/>
    <property type="project" value="UniProtKB"/>
</dbReference>
<dbReference type="GO" id="GO:0032993">
    <property type="term" value="C:protein-DNA complex"/>
    <property type="evidence" value="ECO:0000314"/>
    <property type="project" value="ParkinsonsUK-UCL"/>
</dbReference>
<dbReference type="GO" id="GO:0090575">
    <property type="term" value="C:RNA polymerase II transcription regulator complex"/>
    <property type="evidence" value="ECO:0000314"/>
    <property type="project" value="NTNU_SB"/>
</dbReference>
<dbReference type="GO" id="GO:0003677">
    <property type="term" value="F:DNA binding"/>
    <property type="evidence" value="ECO:0000314"/>
    <property type="project" value="UniProtKB"/>
</dbReference>
<dbReference type="GO" id="GO:0001228">
    <property type="term" value="F:DNA-binding transcription activator activity, RNA polymerase II-specific"/>
    <property type="evidence" value="ECO:0000316"/>
    <property type="project" value="ARUK-UCL"/>
</dbReference>
<dbReference type="GO" id="GO:0003700">
    <property type="term" value="F:DNA-binding transcription factor activity"/>
    <property type="evidence" value="ECO:0000304"/>
    <property type="project" value="ProtInc"/>
</dbReference>
<dbReference type="GO" id="GO:0000981">
    <property type="term" value="F:DNA-binding transcription factor activity, RNA polymerase II-specific"/>
    <property type="evidence" value="ECO:0000247"/>
    <property type="project" value="NTNU_SB"/>
</dbReference>
<dbReference type="GO" id="GO:0140297">
    <property type="term" value="F:DNA-binding transcription factor binding"/>
    <property type="evidence" value="ECO:0000353"/>
    <property type="project" value="UniProtKB"/>
</dbReference>
<dbReference type="GO" id="GO:0046982">
    <property type="term" value="F:protein heterodimerization activity"/>
    <property type="evidence" value="ECO:0007669"/>
    <property type="project" value="InterPro"/>
</dbReference>
<dbReference type="GO" id="GO:0000978">
    <property type="term" value="F:RNA polymerase II cis-regulatory region sequence-specific DNA binding"/>
    <property type="evidence" value="ECO:0000314"/>
    <property type="project" value="ARUK-UCL"/>
</dbReference>
<dbReference type="GO" id="GO:1990830">
    <property type="term" value="P:cellular response to leukemia inhibitory factor"/>
    <property type="evidence" value="ECO:0007669"/>
    <property type="project" value="Ensembl"/>
</dbReference>
<dbReference type="GO" id="GO:0045944">
    <property type="term" value="P:positive regulation of transcription by RNA polymerase II"/>
    <property type="evidence" value="ECO:0000314"/>
    <property type="project" value="ARUK-UCL"/>
</dbReference>
<dbReference type="GO" id="GO:0006355">
    <property type="term" value="P:regulation of DNA-templated transcription"/>
    <property type="evidence" value="ECO:0000314"/>
    <property type="project" value="UniProtKB"/>
</dbReference>
<dbReference type="GO" id="GO:0006357">
    <property type="term" value="P:regulation of transcription by RNA polymerase II"/>
    <property type="evidence" value="ECO:0000318"/>
    <property type="project" value="GO_Central"/>
</dbReference>
<dbReference type="CDD" id="cd22907">
    <property type="entry name" value="HFD_NFYB"/>
    <property type="match status" value="1"/>
</dbReference>
<dbReference type="FunFam" id="1.10.20.10:FF:000027">
    <property type="entry name" value="Nuclear transcription factor Y subunit beta"/>
    <property type="match status" value="1"/>
</dbReference>
<dbReference type="Gene3D" id="1.10.20.10">
    <property type="entry name" value="Histone, subunit A"/>
    <property type="match status" value="1"/>
</dbReference>
<dbReference type="InterPro" id="IPR003958">
    <property type="entry name" value="CBFA_NFYB_domain"/>
</dbReference>
<dbReference type="InterPro" id="IPR009072">
    <property type="entry name" value="Histone-fold"/>
</dbReference>
<dbReference type="InterPro" id="IPR027113">
    <property type="entry name" value="Transc_fact_NFYB/HAP3"/>
</dbReference>
<dbReference type="InterPro" id="IPR003956">
    <property type="entry name" value="Transcrpt_fac_NFYB/HAP3_CS"/>
</dbReference>
<dbReference type="PANTHER" id="PTHR11064">
    <property type="entry name" value="CCAAT-BINDING TRANSCRIPTION FACTOR-RELATED"/>
    <property type="match status" value="1"/>
</dbReference>
<dbReference type="PANTHER" id="PTHR11064:SF195">
    <property type="entry name" value="NUCLEAR TRANSCRIPTION FACTOR Y SUBUNIT BETA"/>
    <property type="match status" value="1"/>
</dbReference>
<dbReference type="Pfam" id="PF00808">
    <property type="entry name" value="CBFD_NFYB_HMF"/>
    <property type="match status" value="1"/>
</dbReference>
<dbReference type="PRINTS" id="PR00615">
    <property type="entry name" value="CCAATSUBUNTA"/>
</dbReference>
<dbReference type="SUPFAM" id="SSF47113">
    <property type="entry name" value="Histone-fold"/>
    <property type="match status" value="1"/>
</dbReference>
<dbReference type="PROSITE" id="PS00685">
    <property type="entry name" value="NFYB_HAP3"/>
    <property type="match status" value="1"/>
</dbReference>
<evidence type="ECO:0000250" key="1"/>
<evidence type="ECO:0000256" key="2">
    <source>
        <dbReference type="SAM" id="MobiDB-lite"/>
    </source>
</evidence>
<evidence type="ECO:0000269" key="3">
    <source>
    </source>
</evidence>
<evidence type="ECO:0000269" key="4">
    <source>
    </source>
</evidence>
<evidence type="ECO:0000305" key="5"/>
<evidence type="ECO:0007829" key="6">
    <source>
        <dbReference type="PDB" id="6QMP"/>
    </source>
</evidence>
<evidence type="ECO:0007829" key="7">
    <source>
        <dbReference type="PDB" id="6QMQ"/>
    </source>
</evidence>
<evidence type="ECO:0007829" key="8">
    <source>
        <dbReference type="PDB" id="8QU4"/>
    </source>
</evidence>
<proteinExistence type="evidence at protein level"/>
<reference key="1">
    <citation type="journal article" date="1992" name="J. Biol. Chem.">
        <title>Intron-exon organization of the NF-Y genes. Tissue-specific splicing modifies an activation domain.</title>
        <authorList>
            <person name="Li X.-Y."/>
            <person name="Hooft van Huijsduijnen R."/>
            <person name="Mantovani R."/>
            <person name="Benoist C.O."/>
            <person name="Mathis D."/>
        </authorList>
    </citation>
    <scope>NUCLEOTIDE SEQUENCE [MRNA]</scope>
</reference>
<reference key="2">
    <citation type="submission" date="1992-11" db="EMBL/GenBank/DDBJ databases">
        <title>Sequence of human NF-YB, a transcriptional regulatory protein of MHC class II genes.</title>
        <authorList>
            <person name="Badley Clarke J."/>
            <person name="Ting J.P.Y."/>
        </authorList>
    </citation>
    <scope>NUCLEOTIDE SEQUENCE [MRNA]</scope>
</reference>
<reference key="3">
    <citation type="journal article" date="1992" name="Nucleic Acids Res.">
        <title>Evolutionary variation of the CCAAT-binding transcription factor NF-Y.</title>
        <authorList>
            <person name="Li X.-Y."/>
            <person name="Mantovani R."/>
            <person name="Hooft van Huijsduijnen R."/>
            <person name="Andre I."/>
            <person name="Benoist C."/>
            <person name="Mathis D."/>
        </authorList>
    </citation>
    <scope>NUCLEOTIDE SEQUENCE [MRNA]</scope>
</reference>
<reference key="4">
    <citation type="journal article" date="2004" name="Nat. Genet.">
        <title>Complete sequencing and characterization of 21,243 full-length human cDNAs.</title>
        <authorList>
            <person name="Ota T."/>
            <person name="Suzuki Y."/>
            <person name="Nishikawa T."/>
            <person name="Otsuki T."/>
            <person name="Sugiyama T."/>
            <person name="Irie R."/>
            <person name="Wakamatsu A."/>
            <person name="Hayashi K."/>
            <person name="Sato H."/>
            <person name="Nagai K."/>
            <person name="Kimura K."/>
            <person name="Makita H."/>
            <person name="Sekine M."/>
            <person name="Obayashi M."/>
            <person name="Nishi T."/>
            <person name="Shibahara T."/>
            <person name="Tanaka T."/>
            <person name="Ishii S."/>
            <person name="Yamamoto J."/>
            <person name="Saito K."/>
            <person name="Kawai Y."/>
            <person name="Isono Y."/>
            <person name="Nakamura Y."/>
            <person name="Nagahari K."/>
            <person name="Murakami K."/>
            <person name="Yasuda T."/>
            <person name="Iwayanagi T."/>
            <person name="Wagatsuma M."/>
            <person name="Shiratori A."/>
            <person name="Sudo H."/>
            <person name="Hosoiri T."/>
            <person name="Kaku Y."/>
            <person name="Kodaira H."/>
            <person name="Kondo H."/>
            <person name="Sugawara M."/>
            <person name="Takahashi M."/>
            <person name="Kanda K."/>
            <person name="Yokoi T."/>
            <person name="Furuya T."/>
            <person name="Kikkawa E."/>
            <person name="Omura Y."/>
            <person name="Abe K."/>
            <person name="Kamihara K."/>
            <person name="Katsuta N."/>
            <person name="Sato K."/>
            <person name="Tanikawa M."/>
            <person name="Yamazaki M."/>
            <person name="Ninomiya K."/>
            <person name="Ishibashi T."/>
            <person name="Yamashita H."/>
            <person name="Murakawa K."/>
            <person name="Fujimori K."/>
            <person name="Tanai H."/>
            <person name="Kimata M."/>
            <person name="Watanabe M."/>
            <person name="Hiraoka S."/>
            <person name="Chiba Y."/>
            <person name="Ishida S."/>
            <person name="Ono Y."/>
            <person name="Takiguchi S."/>
            <person name="Watanabe S."/>
            <person name="Yosida M."/>
            <person name="Hotuta T."/>
            <person name="Kusano J."/>
            <person name="Kanehori K."/>
            <person name="Takahashi-Fujii A."/>
            <person name="Hara H."/>
            <person name="Tanase T.-O."/>
            <person name="Nomura Y."/>
            <person name="Togiya S."/>
            <person name="Komai F."/>
            <person name="Hara R."/>
            <person name="Takeuchi K."/>
            <person name="Arita M."/>
            <person name="Imose N."/>
            <person name="Musashino K."/>
            <person name="Yuuki H."/>
            <person name="Oshima A."/>
            <person name="Sasaki N."/>
            <person name="Aotsuka S."/>
            <person name="Yoshikawa Y."/>
            <person name="Matsunawa H."/>
            <person name="Ichihara T."/>
            <person name="Shiohata N."/>
            <person name="Sano S."/>
            <person name="Moriya S."/>
            <person name="Momiyama H."/>
            <person name="Satoh N."/>
            <person name="Takami S."/>
            <person name="Terashima Y."/>
            <person name="Suzuki O."/>
            <person name="Nakagawa S."/>
            <person name="Senoh A."/>
            <person name="Mizoguchi H."/>
            <person name="Goto Y."/>
            <person name="Shimizu F."/>
            <person name="Wakebe H."/>
            <person name="Hishigaki H."/>
            <person name="Watanabe T."/>
            <person name="Sugiyama A."/>
            <person name="Takemoto M."/>
            <person name="Kawakami B."/>
            <person name="Yamazaki M."/>
            <person name="Watanabe K."/>
            <person name="Kumagai A."/>
            <person name="Itakura S."/>
            <person name="Fukuzumi Y."/>
            <person name="Fujimori Y."/>
            <person name="Komiyama M."/>
            <person name="Tashiro H."/>
            <person name="Tanigami A."/>
            <person name="Fujiwara T."/>
            <person name="Ono T."/>
            <person name="Yamada K."/>
            <person name="Fujii Y."/>
            <person name="Ozaki K."/>
            <person name="Hirao M."/>
            <person name="Ohmori Y."/>
            <person name="Kawabata A."/>
            <person name="Hikiji T."/>
            <person name="Kobatake N."/>
            <person name="Inagaki H."/>
            <person name="Ikema Y."/>
            <person name="Okamoto S."/>
            <person name="Okitani R."/>
            <person name="Kawakami T."/>
            <person name="Noguchi S."/>
            <person name="Itoh T."/>
            <person name="Shigeta K."/>
            <person name="Senba T."/>
            <person name="Matsumura K."/>
            <person name="Nakajima Y."/>
            <person name="Mizuno T."/>
            <person name="Morinaga M."/>
            <person name="Sasaki M."/>
            <person name="Togashi T."/>
            <person name="Oyama M."/>
            <person name="Hata H."/>
            <person name="Watanabe M."/>
            <person name="Komatsu T."/>
            <person name="Mizushima-Sugano J."/>
            <person name="Satoh T."/>
            <person name="Shirai Y."/>
            <person name="Takahashi Y."/>
            <person name="Nakagawa K."/>
            <person name="Okumura K."/>
            <person name="Nagase T."/>
            <person name="Nomura N."/>
            <person name="Kikuchi H."/>
            <person name="Masuho Y."/>
            <person name="Yamashita R."/>
            <person name="Nakai K."/>
            <person name="Yada T."/>
            <person name="Nakamura Y."/>
            <person name="Ohara O."/>
            <person name="Isogai T."/>
            <person name="Sugano S."/>
        </authorList>
    </citation>
    <scope>NUCLEOTIDE SEQUENCE [LARGE SCALE MRNA]</scope>
</reference>
<reference key="5">
    <citation type="submission" date="2005-07" db="EMBL/GenBank/DDBJ databases">
        <authorList>
            <person name="Mural R.J."/>
            <person name="Istrail S."/>
            <person name="Sutton G.G."/>
            <person name="Florea L."/>
            <person name="Halpern A.L."/>
            <person name="Mobarry C.M."/>
            <person name="Lippert R."/>
            <person name="Walenz B."/>
            <person name="Shatkay H."/>
            <person name="Dew I."/>
            <person name="Miller J.R."/>
            <person name="Flanigan M.J."/>
            <person name="Edwards N.J."/>
            <person name="Bolanos R."/>
            <person name="Fasulo D."/>
            <person name="Halldorsson B.V."/>
            <person name="Hannenhalli S."/>
            <person name="Turner R."/>
            <person name="Yooseph S."/>
            <person name="Lu F."/>
            <person name="Nusskern D.R."/>
            <person name="Shue B.C."/>
            <person name="Zheng X.H."/>
            <person name="Zhong F."/>
            <person name="Delcher A.L."/>
            <person name="Huson D.H."/>
            <person name="Kravitz S.A."/>
            <person name="Mouchard L."/>
            <person name="Reinert K."/>
            <person name="Remington K.A."/>
            <person name="Clark A.G."/>
            <person name="Waterman M.S."/>
            <person name="Eichler E.E."/>
            <person name="Adams M.D."/>
            <person name="Hunkapiller M.W."/>
            <person name="Myers E.W."/>
            <person name="Venter J.C."/>
        </authorList>
    </citation>
    <scope>NUCLEOTIDE SEQUENCE [LARGE SCALE GENOMIC DNA]</scope>
</reference>
<reference key="6">
    <citation type="journal article" date="2004" name="Genome Res.">
        <title>The status, quality, and expansion of the NIH full-length cDNA project: the Mammalian Gene Collection (MGC).</title>
        <authorList>
            <consortium name="The MGC Project Team"/>
        </authorList>
    </citation>
    <scope>NUCLEOTIDE SEQUENCE [LARGE SCALE MRNA]</scope>
    <source>
        <tissue>Urinary bladder</tissue>
    </source>
</reference>
<reference key="7">
    <citation type="journal article" date="2004" name="Nucleic Acids Res.">
        <title>Human p32, interacts with B subunit of the CCAAT-binding factor, CBF/NF-Y, and inhibits CBF-mediated transcription activation in vitro.</title>
        <authorList>
            <person name="Chattopadhyay C."/>
            <person name="Hawke D."/>
            <person name="Kobayashi R."/>
            <person name="Maity S.N."/>
        </authorList>
    </citation>
    <scope>INTERACTION WITH C1QBP</scope>
</reference>
<reference key="8">
    <citation type="journal article" date="2011" name="BMC Syst. Biol.">
        <title>Initial characterization of the human central proteome.</title>
        <authorList>
            <person name="Burkard T.R."/>
            <person name="Planyavsky M."/>
            <person name="Kaupe I."/>
            <person name="Breitwieser F.P."/>
            <person name="Buerckstuemmer T."/>
            <person name="Bennett K.L."/>
            <person name="Superti-Furga G."/>
            <person name="Colinge J."/>
        </authorList>
    </citation>
    <scope>IDENTIFICATION BY MASS SPECTROMETRY [LARGE SCALE ANALYSIS]</scope>
</reference>
<reference key="9">
    <citation type="journal article" date="2003" name="J. Biol. Chem.">
        <title>The NF-YB/NF-YC structure gives insight into DNA binding and transcription regulation by CCAAT factor NF-Y.</title>
        <authorList>
            <person name="Romier C."/>
            <person name="Cocchiarella F."/>
            <person name="Mantovani R."/>
            <person name="Moras D."/>
        </authorList>
    </citation>
    <scope>X-RAY CRYSTALLOGRAPHY (1.67 ANGSTROMS) OF 51-143</scope>
</reference>
<reference key="10">
    <citation type="journal article" date="2013" name="Cell">
        <title>Sequence-specific transcription factor NF-Y displays histone-like DNA binding and H2B-like ubiquitination.</title>
        <authorList>
            <person name="Nardini M."/>
            <person name="Gnesutta N."/>
            <person name="Donati G."/>
            <person name="Gatta R."/>
            <person name="Forni C."/>
            <person name="Fossati A."/>
            <person name="Vonrhein C."/>
            <person name="Moras D."/>
            <person name="Romier C."/>
            <person name="Bolognesi M."/>
            <person name="Mantovani R."/>
        </authorList>
    </citation>
    <scope>X-RAY CRYSTALLOGRAPHY (3.08 ANGSTROMS) OF 51-143 IN COMPLEX WITH NYFA; NYFC AND PROMOTER DNA</scope>
    <scope>SUBUNIT</scope>
    <scope>UBIQUITINATION AT LYS-140</scope>
</reference>
<sequence>MTMDGDSSTTDASQLGISADYIGGSHYVIQPHDDTEDSMNDHEDTNGSKESFREQDIYLPIANVARIMKNAIPQTGKIAKDAKECVQECVSEFISFITSEASERCHQEKRKTINGEDILFAMSTLGFDSYVEPLKLYLQKFREAMKGEKGIGGAVTATDGLSEELTEEAFTNQLPAGLITTDGQQQNVMVYTTSYQQISGVQQIQFS</sequence>
<feature type="chain" id="PRO_0000204609" description="Nuclear transcription factor Y subunit beta">
    <location>
        <begin position="1"/>
        <end position="207"/>
    </location>
</feature>
<feature type="DNA-binding region" evidence="1">
    <location>
        <begin position="59"/>
        <end position="65"/>
    </location>
</feature>
<feature type="region of interest" description="A domain">
    <location>
        <begin position="1"/>
        <end position="52"/>
    </location>
</feature>
<feature type="region of interest" description="Disordered" evidence="2">
    <location>
        <begin position="27"/>
        <end position="52"/>
    </location>
</feature>
<feature type="region of interest" description="B domain">
    <location>
        <begin position="53"/>
        <end position="142"/>
    </location>
</feature>
<feature type="region of interest" description="Subunit association domain (SAD)" evidence="1">
    <location>
        <begin position="86"/>
        <end position="97"/>
    </location>
</feature>
<feature type="region of interest" description="C domain">
    <location>
        <begin position="143"/>
        <end position="207"/>
    </location>
</feature>
<feature type="compositionally biased region" description="Basic and acidic residues" evidence="2">
    <location>
        <begin position="39"/>
        <end position="52"/>
    </location>
</feature>
<feature type="cross-link" description="Glycyl lysine isopeptide (Lys-Gly) (interchain with G-Cter in ubiquitin)" evidence="4">
    <location>
        <position position="140"/>
    </location>
</feature>
<feature type="sequence conflict" description="In Ref. 6; AAH07035." evidence="5" ref="6">
    <original>I</original>
    <variation>M</variation>
    <location>
        <position position="29"/>
    </location>
</feature>
<feature type="turn" evidence="6">
    <location>
        <begin position="55"/>
        <end position="57"/>
    </location>
</feature>
<feature type="helix" evidence="8">
    <location>
        <begin position="61"/>
        <end position="71"/>
    </location>
</feature>
<feature type="helix" evidence="8">
    <location>
        <begin position="80"/>
        <end position="107"/>
    </location>
</feature>
<feature type="strand" evidence="8">
    <location>
        <begin position="111"/>
        <end position="113"/>
    </location>
</feature>
<feature type="helix" evidence="8">
    <location>
        <begin position="115"/>
        <end position="124"/>
    </location>
</feature>
<feature type="turn" evidence="7">
    <location>
        <begin position="125"/>
        <end position="127"/>
    </location>
</feature>
<feature type="helix" evidence="8">
    <location>
        <begin position="128"/>
        <end position="130"/>
    </location>
</feature>
<feature type="helix" evidence="8">
    <location>
        <begin position="131"/>
        <end position="142"/>
    </location>
</feature>
<keyword id="KW-0002">3D-structure</keyword>
<keyword id="KW-0010">Activator</keyword>
<keyword id="KW-0238">DNA-binding</keyword>
<keyword id="KW-1017">Isopeptide bond</keyword>
<keyword id="KW-0539">Nucleus</keyword>
<keyword id="KW-1267">Proteomics identification</keyword>
<keyword id="KW-1185">Reference proteome</keyword>
<keyword id="KW-0804">Transcription</keyword>
<keyword id="KW-0805">Transcription regulation</keyword>
<keyword id="KW-0832">Ubl conjugation</keyword>
<organism>
    <name type="scientific">Homo sapiens</name>
    <name type="common">Human</name>
    <dbReference type="NCBI Taxonomy" id="9606"/>
    <lineage>
        <taxon>Eukaryota</taxon>
        <taxon>Metazoa</taxon>
        <taxon>Chordata</taxon>
        <taxon>Craniata</taxon>
        <taxon>Vertebrata</taxon>
        <taxon>Euteleostomi</taxon>
        <taxon>Mammalia</taxon>
        <taxon>Eutheria</taxon>
        <taxon>Euarchontoglires</taxon>
        <taxon>Primates</taxon>
        <taxon>Haplorrhini</taxon>
        <taxon>Catarrhini</taxon>
        <taxon>Hominidae</taxon>
        <taxon>Homo</taxon>
    </lineage>
</organism>